<accession>Q5KSN5</accession>
<comment type="function">
    <text evidence="2 3">Involved in viguiepinol biosynthesis. Catalyzes the conversion of geranylgeranyl diphosphate (GGDP) into copalyl diphosphate (ent-CDP).</text>
</comment>
<comment type="catalytic activity">
    <reaction evidence="3">
        <text>(2E,6E,10E)-geranylgeranyl diphosphate = ent-copalyl diphosphate</text>
        <dbReference type="Rhea" id="RHEA:14841"/>
        <dbReference type="ChEBI" id="CHEBI:58553"/>
        <dbReference type="ChEBI" id="CHEBI:58756"/>
        <dbReference type="EC" id="5.5.1.13"/>
    </reaction>
</comment>
<comment type="cofactor">
    <cofactor evidence="3">
        <name>a divalent metal cation</name>
        <dbReference type="ChEBI" id="CHEBI:60240"/>
    </cofactor>
    <text evidence="3">Activity is highest with Mg(2+). Can also use Zn(2+), Co(2+), Mn(2+) and Ni(2+).</text>
</comment>
<comment type="biophysicochemical properties">
    <kinetics>
        <KM evidence="3">13.7 uM for GGDP</KM>
        <text evidence="3">kcat is 0.033 sec(-1).</text>
    </kinetics>
    <phDependence>
        <text evidence="3">Optimum pH is 5.5.</text>
    </phDependence>
    <temperatureDependence>
        <text evidence="3">Optimum temperature is 35 degrees Celsius.</text>
    </temperatureDependence>
</comment>
<comment type="pathway">
    <text evidence="5">Antibiotic biosynthesis.</text>
</comment>
<comment type="subunit">
    <text evidence="3">Homodimer.</text>
</comment>
<comment type="similarity">
    <text evidence="5">Belongs to the terpene synthase family.</text>
</comment>
<dbReference type="EC" id="5.5.1.13" evidence="3"/>
<dbReference type="EMBL" id="AB183750">
    <property type="protein sequence ID" value="BAD86797.1"/>
    <property type="molecule type" value="Genomic_DNA"/>
</dbReference>
<dbReference type="SMR" id="Q5KSN5"/>
<dbReference type="GO" id="GO:0009905">
    <property type="term" value="F:ent-copalyl diphosphate synthase activity"/>
    <property type="evidence" value="ECO:0000314"/>
    <property type="project" value="UniProtKB"/>
</dbReference>
<dbReference type="GO" id="GO:0000287">
    <property type="term" value="F:magnesium ion binding"/>
    <property type="evidence" value="ECO:0007669"/>
    <property type="project" value="TreeGrafter"/>
</dbReference>
<dbReference type="GO" id="GO:0010333">
    <property type="term" value="F:terpene synthase activity"/>
    <property type="evidence" value="ECO:0007669"/>
    <property type="project" value="InterPro"/>
</dbReference>
<dbReference type="GO" id="GO:0017000">
    <property type="term" value="P:antibiotic biosynthetic process"/>
    <property type="evidence" value="ECO:0007669"/>
    <property type="project" value="UniProtKB-KW"/>
</dbReference>
<dbReference type="GO" id="GO:0016102">
    <property type="term" value="P:diterpenoid biosynthetic process"/>
    <property type="evidence" value="ECO:0007669"/>
    <property type="project" value="TreeGrafter"/>
</dbReference>
<dbReference type="Gene3D" id="1.50.10.160">
    <property type="match status" value="1"/>
</dbReference>
<dbReference type="Gene3D" id="1.50.10.20">
    <property type="match status" value="1"/>
</dbReference>
<dbReference type="InterPro" id="IPR032696">
    <property type="entry name" value="SQ_cyclase_C"/>
</dbReference>
<dbReference type="InterPro" id="IPR050148">
    <property type="entry name" value="Terpene_synthase-like"/>
</dbReference>
<dbReference type="InterPro" id="IPR008930">
    <property type="entry name" value="Terpenoid_cyclase/PrenylTrfase"/>
</dbReference>
<dbReference type="PANTHER" id="PTHR31739:SF25">
    <property type="entry name" value="(E,E)-GERANYLLINALOOL SYNTHASE"/>
    <property type="match status" value="1"/>
</dbReference>
<dbReference type="PANTHER" id="PTHR31739">
    <property type="entry name" value="ENT-COPALYL DIPHOSPHATE SYNTHASE, CHLOROPLASTIC"/>
    <property type="match status" value="1"/>
</dbReference>
<dbReference type="Pfam" id="PF13243">
    <property type="entry name" value="SQHop_cyclase_C"/>
    <property type="match status" value="1"/>
</dbReference>
<dbReference type="SUPFAM" id="SSF48239">
    <property type="entry name" value="Terpenoid cyclases/Protein prenyltransferases"/>
    <property type="match status" value="1"/>
</dbReference>
<gene>
    <name evidence="6" type="primary">ent-cdps</name>
</gene>
<sequence length="511" mass="54768">MNVTSFAALRAAAQDIVDEMIADPYGLTSPSVYETARMVVSAPWLEGHRQRVEFLLAQQHEDGTWGGPAAYGLLPTLSAVDALLSVAGTQDARRVAGAVESGLAALAGRFPRNVELPDTIAVELLVPWLIEQVDQRLSRMDDRGDLPGRLDLQADTGTLSGIRELLRQNTGIPEKTWHSLEALGAPAVRSGTVTPMGGAVGASPAATSAWLGDPPHTDAAKACLAYLHQTQARHGGPVSGITSISYFELAWVVTALSGSGLDVDIPAQVPDILRTALGANGLSAGPGLPADSDDTSAALHALDLLGKPESVDCLWEYDTGLYFTCFPKERTPSTSTNAHILVALADRRGQGDTRYDHAAERVGGWLVEQQQPDGRWMDKWHASPYYATACGAAAMARLDGPRTSAALDDAIRWVLDTQHADGSWGRWEGTGEETAYALQVLNHRAAPDRPALEAIRAGRAFLSGHVEDDRRNPPLWHDKDLYTPVRVIRAEILGTLAATQRLAEAEKEARA</sequence>
<reference key="1">
    <citation type="journal article" date="2004" name="J. Antibiot.">
        <title>Presence of copalyl diphosphate synthase gene in an actinomycete possessing the mevalonate pathway.</title>
        <authorList>
            <person name="Kawasaki T."/>
            <person name="Kuzuyama T."/>
            <person name="Kuwamori Y."/>
            <person name="Matsuura N."/>
            <person name="Itoh N."/>
            <person name="Furihata K."/>
            <person name="Seto H."/>
            <person name="Dairi T."/>
        </authorList>
    </citation>
    <scope>NUCLEOTIDE SEQUENCE [GENOMIC DNA]</scope>
    <scope>FUNCTION</scope>
    <source>
        <strain>KO-3988</strain>
    </source>
</reference>
<reference key="2">
    <citation type="journal article" date="2007" name="J. Biochem.">
        <title>Functional analysis of eubacterial ent-copalyl diphosphate synthase and pimara-9(11),15-diene synthase with unique primary sequences.</title>
        <authorList>
            <person name="Ikeda C."/>
            <person name="Hayashi Y."/>
            <person name="Itoh N."/>
            <person name="Seto H."/>
            <person name="Dairi T."/>
        </authorList>
    </citation>
    <scope>FUNCTION</scope>
    <scope>CATALYTIC ACTIVITY</scope>
    <scope>COFACTOR</scope>
    <scope>BIOPHYSICOCHEMICAL PROPERTIES</scope>
    <scope>SUBUNIT</scope>
    <source>
        <strain>KO-3988</strain>
    </source>
</reference>
<feature type="chain" id="PRO_0000431697" description="Ent-copalyl diphosphate synthase">
    <location>
        <begin position="1"/>
        <end position="511"/>
    </location>
</feature>
<feature type="short sequence motif" description="DXDD motif" evidence="5">
    <location>
        <begin position="291"/>
        <end position="294"/>
    </location>
</feature>
<feature type="binding site" evidence="1">
    <location>
        <position position="291"/>
    </location>
    <ligand>
        <name>a divalent metal cation</name>
        <dbReference type="ChEBI" id="CHEBI:60240"/>
    </ligand>
</feature>
<feature type="binding site" evidence="1">
    <location>
        <position position="293"/>
    </location>
    <ligand>
        <name>a divalent metal cation</name>
        <dbReference type="ChEBI" id="CHEBI:60240"/>
    </ligand>
</feature>
<proteinExistence type="evidence at protein level"/>
<protein>
    <recommendedName>
        <fullName evidence="4">Ent-copalyl diphosphate synthase</fullName>
        <shortName evidence="4">Ent-CDP synthase</shortName>
        <ecNumber evidence="3">5.5.1.13</ecNumber>
    </recommendedName>
</protein>
<evidence type="ECO:0000250" key="1">
    <source>
        <dbReference type="UniProtKB" id="C7BKP9"/>
    </source>
</evidence>
<evidence type="ECO:0000269" key="2">
    <source>
    </source>
</evidence>
<evidence type="ECO:0000269" key="3">
    <source>
    </source>
</evidence>
<evidence type="ECO:0000303" key="4">
    <source>
    </source>
</evidence>
<evidence type="ECO:0000305" key="5"/>
<evidence type="ECO:0000312" key="6">
    <source>
        <dbReference type="EMBL" id="BAD86797.1"/>
    </source>
</evidence>
<name>ECDPS_STREO</name>
<keyword id="KW-0045">Antibiotic biosynthesis</keyword>
<keyword id="KW-0413">Isomerase</keyword>
<keyword id="KW-0479">Metal-binding</keyword>
<organism>
    <name type="scientific">Streptomyces sp. (strain KO-3988)</name>
    <dbReference type="NCBI Taxonomy" id="285219"/>
    <lineage>
        <taxon>Bacteria</taxon>
        <taxon>Bacillati</taxon>
        <taxon>Actinomycetota</taxon>
        <taxon>Actinomycetes</taxon>
        <taxon>Kitasatosporales</taxon>
        <taxon>Streptomycetaceae</taxon>
        <taxon>Streptomyces</taxon>
    </lineage>
</organism>